<protein>
    <recommendedName>
        <fullName>Lymphocyte antigen 6 complex locus protein G5c</fullName>
    </recommendedName>
    <alternativeName>
        <fullName>Epididymal secretory protein 8</fullName>
    </alternativeName>
    <alternativeName>
        <fullName>Protein RhE8</fullName>
    </alternativeName>
</protein>
<name>LY65C_MACMU</name>
<comment type="function">
    <text evidence="1">May have a role in hematopoietic cell differentiation.</text>
</comment>
<comment type="subunit">
    <text evidence="1">Forms oligomers.</text>
</comment>
<comment type="subcellular location">
    <subcellularLocation>
        <location evidence="3">Secreted</location>
    </subcellularLocation>
</comment>
<comment type="PTM">
    <text evidence="1">N-glycosylated.</text>
</comment>
<organism>
    <name type="scientific">Macaca mulatta</name>
    <name type="common">Rhesus macaque</name>
    <dbReference type="NCBI Taxonomy" id="9544"/>
    <lineage>
        <taxon>Eukaryota</taxon>
        <taxon>Metazoa</taxon>
        <taxon>Chordata</taxon>
        <taxon>Craniata</taxon>
        <taxon>Vertebrata</taxon>
        <taxon>Euteleostomi</taxon>
        <taxon>Mammalia</taxon>
        <taxon>Eutheria</taxon>
        <taxon>Euarchontoglires</taxon>
        <taxon>Primates</taxon>
        <taxon>Haplorrhini</taxon>
        <taxon>Catarrhini</taxon>
        <taxon>Cercopithecidae</taxon>
        <taxon>Cercopithecinae</taxon>
        <taxon>Macaca</taxon>
    </lineage>
</organism>
<proteinExistence type="evidence at transcript level"/>
<reference key="1">
    <citation type="journal article" date="2003" name="Asian J. Androl.">
        <title>Rodent epididymal cDNAs identified by sequence homology to human and canine counterparts.</title>
        <authorList>
            <person name="Kaepler-Hanno K."/>
            <person name="Kirchhoff C."/>
        </authorList>
    </citation>
    <scope>NUCLEOTIDE SEQUENCE [MRNA]</scope>
</reference>
<keyword id="KW-1015">Disulfide bond</keyword>
<keyword id="KW-0325">Glycoprotein</keyword>
<keyword id="KW-1185">Reference proteome</keyword>
<keyword id="KW-0964">Secreted</keyword>
<keyword id="KW-0732">Signal</keyword>
<feature type="signal peptide" evidence="2">
    <location>
        <begin position="1"/>
        <end position="41"/>
    </location>
</feature>
<feature type="chain" id="PRO_0000323017" description="Lymphocyte antigen 6 complex locus protein G5c">
    <location>
        <begin position="42"/>
        <end position="140"/>
    </location>
</feature>
<feature type="domain" description="UPAR/Ly6">
    <location>
        <begin position="60"/>
        <end position="140"/>
    </location>
</feature>
<feature type="glycosylation site" description="N-linked (GlcNAc...) asparagine" evidence="2">
    <location>
        <position position="96"/>
    </location>
</feature>
<feature type="disulfide bond" evidence="1">
    <location>
        <begin position="62"/>
        <end position="89"/>
    </location>
</feature>
<feature type="disulfide bond" evidence="1">
    <location>
        <begin position="65"/>
        <end position="74"/>
    </location>
</feature>
<feature type="disulfide bond" evidence="1">
    <location>
        <begin position="81"/>
        <end position="107"/>
    </location>
</feature>
<feature type="disulfide bond" evidence="1">
    <location>
        <begin position="116"/>
        <end position="133"/>
    </location>
</feature>
<accession>Q863H0</accession>
<dbReference type="EMBL" id="AJ560720">
    <property type="protein sequence ID" value="CAD90764.1"/>
    <property type="molecule type" value="mRNA"/>
</dbReference>
<dbReference type="RefSeq" id="NP_001028062.1">
    <property type="nucleotide sequence ID" value="NM_001032890.1"/>
</dbReference>
<dbReference type="FunCoup" id="Q863H0">
    <property type="interactions" value="7"/>
</dbReference>
<dbReference type="STRING" id="9544.ENSMMUP00000068796"/>
<dbReference type="GlyCosmos" id="Q863H0">
    <property type="glycosylation" value="1 site, No reported glycans"/>
</dbReference>
<dbReference type="PaxDb" id="9544-ENSMMUP00000020583"/>
<dbReference type="GeneID" id="574241"/>
<dbReference type="KEGG" id="mcc:574241"/>
<dbReference type="CTD" id="80741"/>
<dbReference type="eggNOG" id="ENOG502TD7Y">
    <property type="taxonomic scope" value="Eukaryota"/>
</dbReference>
<dbReference type="InParanoid" id="Q863H0"/>
<dbReference type="OrthoDB" id="9449163at2759"/>
<dbReference type="Proteomes" id="UP000006718">
    <property type="component" value="Unassembled WGS sequence"/>
</dbReference>
<dbReference type="GO" id="GO:0005576">
    <property type="term" value="C:extracellular region"/>
    <property type="evidence" value="ECO:0007669"/>
    <property type="project" value="UniProtKB-SubCell"/>
</dbReference>
<dbReference type="CDD" id="cd23545">
    <property type="entry name" value="TFP_LU_ECD_Ly6G5c"/>
    <property type="match status" value="1"/>
</dbReference>
<dbReference type="InterPro" id="IPR016054">
    <property type="entry name" value="LY6_UPA_recep-like"/>
</dbReference>
<dbReference type="InterPro" id="IPR026110">
    <property type="entry name" value="LY6G5C"/>
</dbReference>
<dbReference type="PANTHER" id="PTHR14909">
    <property type="entry name" value="LYMPHOCYTE ANTIGEN 6 COMPLEX LOCUS PROTEIN G5C"/>
    <property type="match status" value="1"/>
</dbReference>
<dbReference type="PANTHER" id="PTHR14909:SF6">
    <property type="entry name" value="LYMPHOCYTE ANTIGEN 6 COMPLEX LOCUS PROTEIN G5C"/>
    <property type="match status" value="1"/>
</dbReference>
<dbReference type="Pfam" id="PF00021">
    <property type="entry name" value="UPAR_LY6"/>
    <property type="match status" value="1"/>
</dbReference>
<gene>
    <name type="primary">LY6G5C</name>
    <name type="synonym">RHE8</name>
</gene>
<sequence>MRFMAGPAGSQNPGPMCFHSSLQALYTVLLIVLVMMSLVFGKFVPVNWERPQPLPVPKYLRCYRCLLETKELGCLLGSDTCLTPAGSSCITLHIKNGSNSDVMVSDCRSKEQMSDCSHTQTSPVSGFWMFSQCCFLGFLQ</sequence>
<evidence type="ECO:0000250" key="1"/>
<evidence type="ECO:0000255" key="2"/>
<evidence type="ECO:0000305" key="3"/>